<evidence type="ECO:0000250" key="1"/>
<evidence type="ECO:0000305" key="2"/>
<protein>
    <recommendedName>
        <fullName>4-coumarate--CoA ligase</fullName>
        <shortName>4CL</shortName>
        <ecNumber>6.2.1.12</ecNumber>
    </recommendedName>
    <alternativeName>
        <fullName>4-coumaroyl-CoA synthase</fullName>
    </alternativeName>
</protein>
<organism>
    <name type="scientific">Rhodobacter capsulatus (strain ATCC BAA-309 / NBRC 16581 / SB1003)</name>
    <dbReference type="NCBI Taxonomy" id="272942"/>
    <lineage>
        <taxon>Bacteria</taxon>
        <taxon>Pseudomonadati</taxon>
        <taxon>Pseudomonadota</taxon>
        <taxon>Alphaproteobacteria</taxon>
        <taxon>Rhodobacterales</taxon>
        <taxon>Rhodobacter group</taxon>
        <taxon>Rhodobacter</taxon>
    </lineage>
</organism>
<feature type="chain" id="PRO_0000193044" description="4-coumarate--CoA ligase">
    <location>
        <begin position="1"/>
        <end position="384"/>
    </location>
</feature>
<keyword id="KW-0067">ATP-binding</keyword>
<keyword id="KW-0436">Ligase</keyword>
<keyword id="KW-0547">Nucleotide-binding</keyword>
<keyword id="KW-0587">Phenylpropanoid metabolism</keyword>
<keyword id="KW-1185">Reference proteome</keyword>
<proteinExistence type="inferred from homology"/>
<comment type="function">
    <text evidence="1">Converts p-coumaric acid into p-coumaryl CoA. This is necessary for the activation of the photoactive yellow protein (PYP) chromophore (By similarity).</text>
</comment>
<comment type="catalytic activity">
    <reaction>
        <text>(E)-4-coumarate + ATP + CoA = (E)-4-coumaroyl-CoA + AMP + diphosphate</text>
        <dbReference type="Rhea" id="RHEA:19641"/>
        <dbReference type="ChEBI" id="CHEBI:12876"/>
        <dbReference type="ChEBI" id="CHEBI:30616"/>
        <dbReference type="ChEBI" id="CHEBI:33019"/>
        <dbReference type="ChEBI" id="CHEBI:57287"/>
        <dbReference type="ChEBI" id="CHEBI:85008"/>
        <dbReference type="ChEBI" id="CHEBI:456215"/>
        <dbReference type="EC" id="6.2.1.12"/>
    </reaction>
</comment>
<comment type="similarity">
    <text evidence="2">Belongs to the ATP-dependent AMP-binding enzyme family.</text>
</comment>
<comment type="sequence caution" evidence="2">
    <conflict type="erroneous initiation">
        <sequence resource="EMBL-CDS" id="AAC17429"/>
    </conflict>
    <text>Extended N-terminus.</text>
</comment>
<gene>
    <name type="primary">pcl</name>
    <name type="ordered locus">RCAP_rcc01063</name>
</gene>
<accession>O69140</accession>
<accession>D5AR17</accession>
<dbReference type="EC" id="6.2.1.12"/>
<dbReference type="EMBL" id="AF064095">
    <property type="protein sequence ID" value="AAC17429.1"/>
    <property type="status" value="ALT_INIT"/>
    <property type="molecule type" value="Genomic_DNA"/>
</dbReference>
<dbReference type="EMBL" id="CP001312">
    <property type="protein sequence ID" value="ADE84823.1"/>
    <property type="molecule type" value="Genomic_DNA"/>
</dbReference>
<dbReference type="SMR" id="O69140"/>
<dbReference type="STRING" id="272942.RCAP_rcc01063"/>
<dbReference type="KEGG" id="rcp:RCAP_rcc01063"/>
<dbReference type="eggNOG" id="COG0318">
    <property type="taxonomic scope" value="Bacteria"/>
</dbReference>
<dbReference type="HOGENOM" id="CLU_660180_0_0_5"/>
<dbReference type="Proteomes" id="UP000002361">
    <property type="component" value="Chromosome"/>
</dbReference>
<dbReference type="GO" id="GO:0016207">
    <property type="term" value="F:4-coumarate-CoA ligase activity"/>
    <property type="evidence" value="ECO:0007669"/>
    <property type="project" value="UniProtKB-EC"/>
</dbReference>
<dbReference type="GO" id="GO:0005524">
    <property type="term" value="F:ATP binding"/>
    <property type="evidence" value="ECO:0007669"/>
    <property type="project" value="UniProtKB-KW"/>
</dbReference>
<dbReference type="GO" id="GO:0009698">
    <property type="term" value="P:phenylpropanoid metabolic process"/>
    <property type="evidence" value="ECO:0007669"/>
    <property type="project" value="UniProtKB-KW"/>
</dbReference>
<dbReference type="Gene3D" id="3.30.300.30">
    <property type="match status" value="1"/>
</dbReference>
<dbReference type="Gene3D" id="3.40.50.12780">
    <property type="entry name" value="N-terminal domain of ligase-like"/>
    <property type="match status" value="1"/>
</dbReference>
<dbReference type="InterPro" id="IPR012743">
    <property type="entry name" value="4_coum_CoA_lig"/>
</dbReference>
<dbReference type="InterPro" id="IPR025110">
    <property type="entry name" value="AMP-bd_C"/>
</dbReference>
<dbReference type="InterPro" id="IPR045851">
    <property type="entry name" value="AMP-bd_C_sf"/>
</dbReference>
<dbReference type="InterPro" id="IPR020845">
    <property type="entry name" value="AMP-binding_CS"/>
</dbReference>
<dbReference type="InterPro" id="IPR000873">
    <property type="entry name" value="AMP-dep_synth/lig_dom"/>
</dbReference>
<dbReference type="InterPro" id="IPR042099">
    <property type="entry name" value="ANL_N_sf"/>
</dbReference>
<dbReference type="InterPro" id="IPR050237">
    <property type="entry name" value="ATP-dep_AMP-bd_enzyme"/>
</dbReference>
<dbReference type="NCBIfam" id="TIGR02372">
    <property type="entry name" value="4_coum_CoA_lig"/>
    <property type="match status" value="1"/>
</dbReference>
<dbReference type="PANTHER" id="PTHR43767">
    <property type="entry name" value="LONG-CHAIN-FATTY-ACID--COA LIGASE"/>
    <property type="match status" value="1"/>
</dbReference>
<dbReference type="PANTHER" id="PTHR43767:SF1">
    <property type="entry name" value="NONRIBOSOMAL PEPTIDE SYNTHASE PES1 (EUROFUNG)-RELATED"/>
    <property type="match status" value="1"/>
</dbReference>
<dbReference type="Pfam" id="PF00501">
    <property type="entry name" value="AMP-binding"/>
    <property type="match status" value="1"/>
</dbReference>
<dbReference type="Pfam" id="PF13193">
    <property type="entry name" value="AMP-binding_C"/>
    <property type="match status" value="1"/>
</dbReference>
<dbReference type="SUPFAM" id="SSF56801">
    <property type="entry name" value="Acetyl-CoA synthetase-like"/>
    <property type="match status" value="1"/>
</dbReference>
<dbReference type="PROSITE" id="PS00455">
    <property type="entry name" value="AMP_BINDING"/>
    <property type="match status" value="1"/>
</dbReference>
<sequence>MVRRLLISLIRAEARRGRNQILPEAAFTGDPRIDEEGLGFDSLARLDLIGAVRDFFDLSRTGIEDYVYVEPTLQGWIDRIMQHFDLLAARSETAQAVFRTSGSTGTPKPIPHPWPKLMREAASMARDQGLVPAPGGAVIGLVPAHHLFGCLFTALLPELAGAALRDLTAAPPASALRTAQPGDLIIATPHLWAHLGAAGAFPPGLRGVSSGAPMPDALWHSLLAAGLEDLTEVYGASETGGIGLRRAPGAAFTLLPFLSRSADDGISDGPAPLPLQDRLRWTGPVRFVIEGRLDQALQVGGVNVRLGHVKSVLEAEPGVEALALRLGGDRLKAFVVCAADAEAGLEARLRARAEAGLDAPARPQHYRFGRALPLTREGKARDWD</sequence>
<reference key="1">
    <citation type="submission" date="1998-05" db="EMBL/GenBank/DDBJ databases">
        <title>Genetic characterization of photoactive yellow protein from Rhodobacter capsulatus.</title>
        <authorList>
            <person name="Jiang Z."/>
            <person name="Bauer E.C."/>
        </authorList>
    </citation>
    <scope>NUCLEOTIDE SEQUENCE [GENOMIC DNA]</scope>
    <source>
        <strain>ATCC BAA-309 / NBRC 16581 / SB1003</strain>
    </source>
</reference>
<reference key="2">
    <citation type="journal article" date="2010" name="J. Bacteriol.">
        <title>Complete genome sequence of the photosynthetic purple nonsulfur bacterium Rhodobacter capsulatus SB 1003.</title>
        <authorList>
            <person name="Strnad H."/>
            <person name="Lapidus A."/>
            <person name="Paces J."/>
            <person name="Ulbrich P."/>
            <person name="Vlcek C."/>
            <person name="Paces V."/>
            <person name="Haselkorn R."/>
        </authorList>
    </citation>
    <scope>NUCLEOTIDE SEQUENCE [LARGE SCALE GENOMIC DNA]</scope>
    <source>
        <strain>ATCC BAA-309 / NBRC 16581 / SB1003</strain>
    </source>
</reference>
<name>PCL_RHOCB</name>